<accession>Q13404</accession>
<accession>E1P629</accession>
<accession>Q13403</accession>
<accession>Q13532</accession>
<accession>Q5TGE0</accession>
<accession>Q5TGE3</accession>
<accession>Q96H34</accession>
<accession>Q9GZT0</accession>
<accession>Q9GZW1</accession>
<accession>Q9H4J3</accession>
<accession>Q9H4J4</accession>
<accession>Q9UKL1</accession>
<accession>Q9UM48</accession>
<accession>Q9UM49</accession>
<accession>Q9UM50</accession>
<reference key="1">
    <citation type="journal article" date="1997" name="Gene">
        <title>CROC-1 encodes a protein which mediates transcriptional activation of the human FOS promoter.</title>
        <authorList>
            <person name="Rothofsky M.L."/>
            <person name="Lin S.L."/>
        </authorList>
    </citation>
    <scope>NUCLEOTIDE SEQUENCE [MRNA] (ISOFORMS 1 AND 2)</scope>
    <scope>FUNCTION</scope>
    <scope>SUBCELLULAR LOCATION</scope>
    <source>
        <tissue>Brain</tissue>
    </source>
</reference>
<reference key="2">
    <citation type="journal article" date="1998" name="Mol. Cell. Biol.">
        <title>Role of UEV-1, an inactive variant of the E2 ubiquitin-conjugating enzymes, in in vitro differentiation and cell cycle behavior of HT-29-M6 intestinal mucosecretory cells.</title>
        <authorList>
            <person name="Sancho E."/>
            <person name="Vila M.R."/>
            <person name="Sanchez-Pulido L."/>
            <person name="Lozano J.J."/>
            <person name="Paciucci R."/>
            <person name="Nadal M."/>
            <person name="Fox M."/>
            <person name="Harvey C."/>
            <person name="Bercovich B."/>
            <person name="Loukili N."/>
            <person name="Ciechanover A."/>
            <person name="Lin S.L."/>
            <person name="Sanz F."/>
            <person name="Estivill X."/>
            <person name="Valencia A."/>
            <person name="Thomson T.M."/>
        </authorList>
    </citation>
    <scope>NUCLEOTIDE SEQUENCE [MRNA] (ISOFORMS 1; 2 AND 4)</scope>
    <scope>FUNCTION</scope>
    <scope>INDUCTION</scope>
    <scope>TISSUE SPECIFICITY</scope>
    <source>
        <tissue>Colon adenocarcinoma</tissue>
    </source>
</reference>
<reference key="3">
    <citation type="journal article" date="2000" name="Cell">
        <title>Activation of the IkappaB kinase complex by TRAF6 requires a dimeric ubiquitin-conjugating enzyme complex and a unique polyubiquitin chain.</title>
        <authorList>
            <person name="Deng L."/>
            <person name="Wang C."/>
            <person name="Spencer E."/>
            <person name="Yang L."/>
            <person name="Braun A."/>
            <person name="You J."/>
            <person name="Slaughter C."/>
            <person name="Pickart C."/>
            <person name="Chen Z.J."/>
        </authorList>
    </citation>
    <scope>NUCLEOTIDE SEQUENCE [MRNA] (ISOFORM 5)</scope>
    <scope>FUNCTION</scope>
    <scope>INTERACTION WITH TRAF6 AND UBE2N</scope>
    <scope>IDENTIFICATION BY MASS SPECTROMETRY</scope>
</reference>
<reference key="4">
    <citation type="submission" date="2003-05" db="EMBL/GenBank/DDBJ databases">
        <title>Cloning of human full-length CDSs in BD Creator(TM) system donor vector.</title>
        <authorList>
            <person name="Kalnine N."/>
            <person name="Chen X."/>
            <person name="Rolfs A."/>
            <person name="Halleck A."/>
            <person name="Hines L."/>
            <person name="Eisenstein S."/>
            <person name="Koundinya M."/>
            <person name="Raphael J."/>
            <person name="Moreira D."/>
            <person name="Kelley T."/>
            <person name="LaBaer J."/>
            <person name="Lin Y."/>
            <person name="Phelan M."/>
            <person name="Farmer A."/>
        </authorList>
    </citation>
    <scope>NUCLEOTIDE SEQUENCE [LARGE SCALE MRNA] (ISOFORM 3)</scope>
</reference>
<reference key="5">
    <citation type="journal article" date="2004" name="Nat. Genet.">
        <title>Complete sequencing and characterization of 21,243 full-length human cDNAs.</title>
        <authorList>
            <person name="Ota T."/>
            <person name="Suzuki Y."/>
            <person name="Nishikawa T."/>
            <person name="Otsuki T."/>
            <person name="Sugiyama T."/>
            <person name="Irie R."/>
            <person name="Wakamatsu A."/>
            <person name="Hayashi K."/>
            <person name="Sato H."/>
            <person name="Nagai K."/>
            <person name="Kimura K."/>
            <person name="Makita H."/>
            <person name="Sekine M."/>
            <person name="Obayashi M."/>
            <person name="Nishi T."/>
            <person name="Shibahara T."/>
            <person name="Tanaka T."/>
            <person name="Ishii S."/>
            <person name="Yamamoto J."/>
            <person name="Saito K."/>
            <person name="Kawai Y."/>
            <person name="Isono Y."/>
            <person name="Nakamura Y."/>
            <person name="Nagahari K."/>
            <person name="Murakami K."/>
            <person name="Yasuda T."/>
            <person name="Iwayanagi T."/>
            <person name="Wagatsuma M."/>
            <person name="Shiratori A."/>
            <person name="Sudo H."/>
            <person name="Hosoiri T."/>
            <person name="Kaku Y."/>
            <person name="Kodaira H."/>
            <person name="Kondo H."/>
            <person name="Sugawara M."/>
            <person name="Takahashi M."/>
            <person name="Kanda K."/>
            <person name="Yokoi T."/>
            <person name="Furuya T."/>
            <person name="Kikkawa E."/>
            <person name="Omura Y."/>
            <person name="Abe K."/>
            <person name="Kamihara K."/>
            <person name="Katsuta N."/>
            <person name="Sato K."/>
            <person name="Tanikawa M."/>
            <person name="Yamazaki M."/>
            <person name="Ninomiya K."/>
            <person name="Ishibashi T."/>
            <person name="Yamashita H."/>
            <person name="Murakawa K."/>
            <person name="Fujimori K."/>
            <person name="Tanai H."/>
            <person name="Kimata M."/>
            <person name="Watanabe M."/>
            <person name="Hiraoka S."/>
            <person name="Chiba Y."/>
            <person name="Ishida S."/>
            <person name="Ono Y."/>
            <person name="Takiguchi S."/>
            <person name="Watanabe S."/>
            <person name="Yosida M."/>
            <person name="Hotuta T."/>
            <person name="Kusano J."/>
            <person name="Kanehori K."/>
            <person name="Takahashi-Fujii A."/>
            <person name="Hara H."/>
            <person name="Tanase T.-O."/>
            <person name="Nomura Y."/>
            <person name="Togiya S."/>
            <person name="Komai F."/>
            <person name="Hara R."/>
            <person name="Takeuchi K."/>
            <person name="Arita M."/>
            <person name="Imose N."/>
            <person name="Musashino K."/>
            <person name="Yuuki H."/>
            <person name="Oshima A."/>
            <person name="Sasaki N."/>
            <person name="Aotsuka S."/>
            <person name="Yoshikawa Y."/>
            <person name="Matsunawa H."/>
            <person name="Ichihara T."/>
            <person name="Shiohata N."/>
            <person name="Sano S."/>
            <person name="Moriya S."/>
            <person name="Momiyama H."/>
            <person name="Satoh N."/>
            <person name="Takami S."/>
            <person name="Terashima Y."/>
            <person name="Suzuki O."/>
            <person name="Nakagawa S."/>
            <person name="Senoh A."/>
            <person name="Mizoguchi H."/>
            <person name="Goto Y."/>
            <person name="Shimizu F."/>
            <person name="Wakebe H."/>
            <person name="Hishigaki H."/>
            <person name="Watanabe T."/>
            <person name="Sugiyama A."/>
            <person name="Takemoto M."/>
            <person name="Kawakami B."/>
            <person name="Yamazaki M."/>
            <person name="Watanabe K."/>
            <person name="Kumagai A."/>
            <person name="Itakura S."/>
            <person name="Fukuzumi Y."/>
            <person name="Fujimori Y."/>
            <person name="Komiyama M."/>
            <person name="Tashiro H."/>
            <person name="Tanigami A."/>
            <person name="Fujiwara T."/>
            <person name="Ono T."/>
            <person name="Yamada K."/>
            <person name="Fujii Y."/>
            <person name="Ozaki K."/>
            <person name="Hirao M."/>
            <person name="Ohmori Y."/>
            <person name="Kawabata A."/>
            <person name="Hikiji T."/>
            <person name="Kobatake N."/>
            <person name="Inagaki H."/>
            <person name="Ikema Y."/>
            <person name="Okamoto S."/>
            <person name="Okitani R."/>
            <person name="Kawakami T."/>
            <person name="Noguchi S."/>
            <person name="Itoh T."/>
            <person name="Shigeta K."/>
            <person name="Senba T."/>
            <person name="Matsumura K."/>
            <person name="Nakajima Y."/>
            <person name="Mizuno T."/>
            <person name="Morinaga M."/>
            <person name="Sasaki M."/>
            <person name="Togashi T."/>
            <person name="Oyama M."/>
            <person name="Hata H."/>
            <person name="Watanabe M."/>
            <person name="Komatsu T."/>
            <person name="Mizushima-Sugano J."/>
            <person name="Satoh T."/>
            <person name="Shirai Y."/>
            <person name="Takahashi Y."/>
            <person name="Nakagawa K."/>
            <person name="Okumura K."/>
            <person name="Nagase T."/>
            <person name="Nomura N."/>
            <person name="Kikuchi H."/>
            <person name="Masuho Y."/>
            <person name="Yamashita R."/>
            <person name="Nakai K."/>
            <person name="Yada T."/>
            <person name="Nakamura Y."/>
            <person name="Ohara O."/>
            <person name="Isogai T."/>
            <person name="Sugano S."/>
        </authorList>
    </citation>
    <scope>NUCLEOTIDE SEQUENCE [LARGE SCALE MRNA] (ISOFORM 6)</scope>
    <source>
        <tissue>Lung</tissue>
    </source>
</reference>
<reference key="6">
    <citation type="journal article" date="2001" name="Nature">
        <title>The DNA sequence and comparative analysis of human chromosome 20.</title>
        <authorList>
            <person name="Deloukas P."/>
            <person name="Matthews L.H."/>
            <person name="Ashurst J.L."/>
            <person name="Burton J."/>
            <person name="Gilbert J.G.R."/>
            <person name="Jones M."/>
            <person name="Stavrides G."/>
            <person name="Almeida J.P."/>
            <person name="Babbage A.K."/>
            <person name="Bagguley C.L."/>
            <person name="Bailey J."/>
            <person name="Barlow K.F."/>
            <person name="Bates K.N."/>
            <person name="Beard L.M."/>
            <person name="Beare D.M."/>
            <person name="Beasley O.P."/>
            <person name="Bird C.P."/>
            <person name="Blakey S.E."/>
            <person name="Bridgeman A.M."/>
            <person name="Brown A.J."/>
            <person name="Buck D."/>
            <person name="Burrill W.D."/>
            <person name="Butler A.P."/>
            <person name="Carder C."/>
            <person name="Carter N.P."/>
            <person name="Chapman J.C."/>
            <person name="Clamp M."/>
            <person name="Clark G."/>
            <person name="Clark L.N."/>
            <person name="Clark S.Y."/>
            <person name="Clee C.M."/>
            <person name="Clegg S."/>
            <person name="Cobley V.E."/>
            <person name="Collier R.E."/>
            <person name="Connor R.E."/>
            <person name="Corby N.R."/>
            <person name="Coulson A."/>
            <person name="Coville G.J."/>
            <person name="Deadman R."/>
            <person name="Dhami P.D."/>
            <person name="Dunn M."/>
            <person name="Ellington A.G."/>
            <person name="Frankland J.A."/>
            <person name="Fraser A."/>
            <person name="French L."/>
            <person name="Garner P."/>
            <person name="Grafham D.V."/>
            <person name="Griffiths C."/>
            <person name="Griffiths M.N.D."/>
            <person name="Gwilliam R."/>
            <person name="Hall R.E."/>
            <person name="Hammond S."/>
            <person name="Harley J.L."/>
            <person name="Heath P.D."/>
            <person name="Ho S."/>
            <person name="Holden J.L."/>
            <person name="Howden P.J."/>
            <person name="Huckle E."/>
            <person name="Hunt A.R."/>
            <person name="Hunt S.E."/>
            <person name="Jekosch K."/>
            <person name="Johnson C.M."/>
            <person name="Johnson D."/>
            <person name="Kay M.P."/>
            <person name="Kimberley A.M."/>
            <person name="King A."/>
            <person name="Knights A."/>
            <person name="Laird G.K."/>
            <person name="Lawlor S."/>
            <person name="Lehvaeslaiho M.H."/>
            <person name="Leversha M.A."/>
            <person name="Lloyd C."/>
            <person name="Lloyd D.M."/>
            <person name="Lovell J.D."/>
            <person name="Marsh V.L."/>
            <person name="Martin S.L."/>
            <person name="McConnachie L.J."/>
            <person name="McLay K."/>
            <person name="McMurray A.A."/>
            <person name="Milne S.A."/>
            <person name="Mistry D."/>
            <person name="Moore M.J.F."/>
            <person name="Mullikin J.C."/>
            <person name="Nickerson T."/>
            <person name="Oliver K."/>
            <person name="Parker A."/>
            <person name="Patel R."/>
            <person name="Pearce T.A.V."/>
            <person name="Peck A.I."/>
            <person name="Phillimore B.J.C.T."/>
            <person name="Prathalingam S.R."/>
            <person name="Plumb R.W."/>
            <person name="Ramsay H."/>
            <person name="Rice C.M."/>
            <person name="Ross M.T."/>
            <person name="Scott C.E."/>
            <person name="Sehra H.K."/>
            <person name="Shownkeen R."/>
            <person name="Sims S."/>
            <person name="Skuce C.D."/>
            <person name="Smith M.L."/>
            <person name="Soderlund C."/>
            <person name="Steward C.A."/>
            <person name="Sulston J.E."/>
            <person name="Swann R.M."/>
            <person name="Sycamore N."/>
            <person name="Taylor R."/>
            <person name="Tee L."/>
            <person name="Thomas D.W."/>
            <person name="Thorpe A."/>
            <person name="Tracey A."/>
            <person name="Tromans A.C."/>
            <person name="Vaudin M."/>
            <person name="Wall M."/>
            <person name="Wallis J.M."/>
            <person name="Whitehead S.L."/>
            <person name="Whittaker P."/>
            <person name="Willey D.L."/>
            <person name="Williams L."/>
            <person name="Williams S.A."/>
            <person name="Wilming L."/>
            <person name="Wray P.W."/>
            <person name="Hubbard T."/>
            <person name="Durbin R.M."/>
            <person name="Bentley D.R."/>
            <person name="Beck S."/>
            <person name="Rogers J."/>
        </authorList>
    </citation>
    <scope>NUCLEOTIDE SEQUENCE [LARGE SCALE GENOMIC DNA]</scope>
</reference>
<reference key="7">
    <citation type="submission" date="2005-09" db="EMBL/GenBank/DDBJ databases">
        <authorList>
            <person name="Mural R.J."/>
            <person name="Istrail S."/>
            <person name="Sutton G.G."/>
            <person name="Florea L."/>
            <person name="Halpern A.L."/>
            <person name="Mobarry C.M."/>
            <person name="Lippert R."/>
            <person name="Walenz B."/>
            <person name="Shatkay H."/>
            <person name="Dew I."/>
            <person name="Miller J.R."/>
            <person name="Flanigan M.J."/>
            <person name="Edwards N.J."/>
            <person name="Bolanos R."/>
            <person name="Fasulo D."/>
            <person name="Halldorsson B.V."/>
            <person name="Hannenhalli S."/>
            <person name="Turner R."/>
            <person name="Yooseph S."/>
            <person name="Lu F."/>
            <person name="Nusskern D.R."/>
            <person name="Shue B.C."/>
            <person name="Zheng X.H."/>
            <person name="Zhong F."/>
            <person name="Delcher A.L."/>
            <person name="Huson D.H."/>
            <person name="Kravitz S.A."/>
            <person name="Mouchard L."/>
            <person name="Reinert K."/>
            <person name="Remington K.A."/>
            <person name="Clark A.G."/>
            <person name="Waterman M.S."/>
            <person name="Eichler E.E."/>
            <person name="Adams M.D."/>
            <person name="Hunkapiller M.W."/>
            <person name="Myers E.W."/>
            <person name="Venter J.C."/>
        </authorList>
    </citation>
    <scope>NUCLEOTIDE SEQUENCE [LARGE SCALE GENOMIC DNA]</scope>
</reference>
<reference key="8">
    <citation type="submission" date="2009-07" db="UniProtKB">
        <authorList>
            <person name="Bienvenut W.V."/>
            <person name="Pchelintsev N."/>
            <person name="Adams P.D."/>
        </authorList>
    </citation>
    <scope>PROTEIN SEQUENCE OF 2-13 (ISOFORM 3)</scope>
    <scope>CLEAVAGE OF INITIATOR METHIONINE</scope>
    <scope>ACETYLATION AT ALA-2</scope>
    <scope>IDENTIFICATION BY MASS SPECTROMETRY</scope>
    <source>
        <tissue>Lung fibroblast</tissue>
    </source>
</reference>
<reference key="9">
    <citation type="journal article" date="2004" name="Genome Res.">
        <title>The status, quality, and expansion of the NIH full-length cDNA project: the Mammalian Gene Collection (MGC).</title>
        <authorList>
            <consortium name="The MGC Project Team"/>
        </authorList>
    </citation>
    <scope>NUCLEOTIDE SEQUENCE [LARGE SCALE MRNA] OF 8-147 (ISOFORMS 1 AND 3)</scope>
    <source>
        <tissue>Muscle</tissue>
    </source>
</reference>
<reference key="10">
    <citation type="journal article" date="1998" name="FEBS Lett.">
        <title>Role of UEV-1A, a homologue of the tumor suppressor protein TSG101, in protection from DNA damage.</title>
        <authorList>
            <person name="Thomson T.M."/>
            <person name="Khalid H."/>
            <person name="Lozano J.J."/>
            <person name="Sancho E."/>
            <person name="Arino J."/>
        </authorList>
    </citation>
    <scope>FUNCTION</scope>
</reference>
<reference key="11">
    <citation type="journal article" date="1998" name="Nucleic Acids Res.">
        <title>The products of the yeast MMS2 and two human homologs (hMMS2 and CROC-1) define a structurally and functionally conserved Ubc-like protein family.</title>
        <authorList>
            <person name="Xiao W."/>
            <person name="Lin S.L."/>
            <person name="Broomfield S."/>
            <person name="Chow B.L."/>
            <person name="Wei Y.-F."/>
        </authorList>
    </citation>
    <scope>FUNCTION</scope>
    <scope>TISSUE SPECIFICITY</scope>
</reference>
<reference key="12">
    <citation type="journal article" date="2000" name="Genome Res.">
        <title>Fusion of the human gene for the polyubiquitination coeffector UEV1 with Kua, a newly identified gene.</title>
        <authorList>
            <person name="Thomson T.M."/>
            <person name="Lozano J.J."/>
            <person name="Loukili N."/>
            <person name="Carrio R."/>
            <person name="Serras F."/>
            <person name="Cormand B."/>
            <person name="Valeri M."/>
            <person name="Diaz V.M."/>
            <person name="Abril J."/>
            <person name="Burset M."/>
            <person name="Merino J."/>
            <person name="Macaya A."/>
            <person name="Corominas M."/>
            <person name="Guigo R."/>
        </authorList>
    </citation>
    <scope>SUBCELLULAR LOCATION</scope>
    <scope>IDENTIFICATION OF PESD1-UBE2V1 FUSION PROTEIN</scope>
    <source>
        <tissue>Colon cancer</tissue>
    </source>
</reference>
<reference key="13">
    <citation type="journal article" date="2009" name="Sci. Signal.">
        <title>Act1, a U-box E3 ubiquitin ligase for IL-17 signaling.</title>
        <authorList>
            <person name="Liu C."/>
            <person name="Qian W."/>
            <person name="Qian Y."/>
            <person name="Giltiay N.V."/>
            <person name="Lu Y."/>
            <person name="Swaidani S."/>
            <person name="Misra S."/>
            <person name="Deng L."/>
            <person name="Chen Z.J."/>
            <person name="Li X."/>
        </authorList>
    </citation>
    <scope>FUNCTION</scope>
</reference>
<reference key="14">
    <citation type="journal article" date="2010" name="J. Biol. Chem.">
        <title>The E2 ubiquitin-conjugating enzymes direct polyubiquitination to preferred lysines.</title>
        <authorList>
            <person name="David Y."/>
            <person name="Ziv T."/>
            <person name="Admon A."/>
            <person name="Navon A."/>
        </authorList>
    </citation>
    <scope>FUNCTION</scope>
</reference>
<reference key="15">
    <citation type="journal article" date="2011" name="Nature">
        <title>TRIM5 is an innate immune sensor for the retrovirus capsid lattice.</title>
        <authorList>
            <person name="Pertel T."/>
            <person name="Hausmann S."/>
            <person name="Morger D."/>
            <person name="Zueger S."/>
            <person name="Guerra J."/>
            <person name="Lascano J."/>
            <person name="Reinhard C."/>
            <person name="Santoni F.A."/>
            <person name="Uchil P.D."/>
            <person name="Chatel L."/>
            <person name="Bisiaux A."/>
            <person name="Albert M.L."/>
            <person name="Strambio-De-Castillia C."/>
            <person name="Mothes W."/>
            <person name="Pizzato M."/>
            <person name="Gruetter M.G."/>
            <person name="Luban J."/>
        </authorList>
    </citation>
    <scope>FUNCTION</scope>
</reference>
<reference key="16">
    <citation type="journal article" date="2012" name="Proc. Natl. Acad. Sci. U.S.A.">
        <title>N-terminal acetylome analyses and functional insights of the N-terminal acetyltransferase NatB.</title>
        <authorList>
            <person name="Van Damme P."/>
            <person name="Lasa M."/>
            <person name="Polevoda B."/>
            <person name="Gazquez C."/>
            <person name="Elosegui-Artola A."/>
            <person name="Kim D.S."/>
            <person name="De Juan-Pardo E."/>
            <person name="Demeyer K."/>
            <person name="Hole K."/>
            <person name="Larrea E."/>
            <person name="Timmerman E."/>
            <person name="Prieto J."/>
            <person name="Arnesen T."/>
            <person name="Sherman F."/>
            <person name="Gevaert K."/>
            <person name="Aldabe R."/>
        </authorList>
    </citation>
    <scope>ACETYLATION [LARGE SCALE ANALYSIS] AT ALA-2</scope>
    <scope>CLEAVAGE OF INITIATOR METHIONINE [LARGE SCALE ANALYSIS]</scope>
    <scope>IDENTIFICATION BY MASS SPECTROMETRY [LARGE SCALE ANALYSIS]</scope>
</reference>
<reference key="17">
    <citation type="journal article" date="2015" name="Proteomics">
        <title>N-terminome analysis of the human mitochondrial proteome.</title>
        <authorList>
            <person name="Vaca Jacome A.S."/>
            <person name="Rabilloud T."/>
            <person name="Schaeffer-Reiss C."/>
            <person name="Rompais M."/>
            <person name="Ayoub D."/>
            <person name="Lane L."/>
            <person name="Bairoch A."/>
            <person name="Van Dorsselaer A."/>
            <person name="Carapito C."/>
        </authorList>
    </citation>
    <scope>ACETYLATION [LARGE SCALE ANALYSIS] AT ALA-2</scope>
    <scope>CLEAVAGE OF INITIATOR METHIONINE [LARGE SCALE ANALYSIS]</scope>
    <scope>IDENTIFICATION BY MASS SPECTROMETRY [LARGE SCALE ANALYSIS]</scope>
</reference>
<reference key="18">
    <citation type="journal article" date="2019" name="Cell">
        <title>Ubiquitin-Dependent and -Independent Roles of E3 Ligase RIPLET in Innate Immunity.</title>
        <authorList>
            <person name="Cadena C."/>
            <person name="Ahmad S."/>
            <person name="Xavier A."/>
            <person name="Willemsen J."/>
            <person name="Park S."/>
            <person name="Park J.W."/>
            <person name="Oh S.W."/>
            <person name="Fujita T."/>
            <person name="Hou F."/>
            <person name="Binder M."/>
            <person name="Hur S."/>
        </authorList>
    </citation>
    <scope>FUNCTION</scope>
</reference>
<reference key="19">
    <citation type="journal article" date="2005" name="Mol. Cell">
        <title>Chaperoned ubiquitylation -- crystal structures of the CHIP U box E3 ubiquitin ligase and a CHIP-Ubc13-Uev1a complex.</title>
        <authorList>
            <person name="Zhang M."/>
            <person name="Windheim M."/>
            <person name="Roe S.M."/>
            <person name="Peggie M."/>
            <person name="Cohen P."/>
            <person name="Prodromou C."/>
            <person name="Pearl L.H."/>
        </authorList>
    </citation>
    <scope>X-RAY CRYSTALLOGRAPHY (2.90 ANGSTROMS) OF 8-147 IN COMPLEX WITH STUB1 AND UBE2N</scope>
</reference>
<reference evidence="22" key="20">
    <citation type="journal article" date="2006" name="Biochemistry">
        <title>Structure and interactions of the ubiquitin-conjugating enzyme variant human Uev1a: implications for enzymatic synthesis of polyubiquitin chains.</title>
        <authorList>
            <person name="Hau D.D."/>
            <person name="Lewis M.J."/>
            <person name="Saltibus L.F."/>
            <person name="Pastushok L."/>
            <person name="Xiao W."/>
            <person name="Spyracopoulos L."/>
        </authorList>
    </citation>
    <scope>STRUCTURE BY NMR OF 7-147</scope>
    <scope>INTERACTION WITH UBE2N</scope>
</reference>
<reference evidence="21" key="21">
    <citation type="journal article" date="2012" name="Mol. Cell. Proteomics">
        <title>A human ubiquitin conjugating enzyme (E2)-HECT E3 ligase structure-function screen.</title>
        <authorList>
            <person name="Sheng Y."/>
            <person name="Hong J.H."/>
            <person name="Doherty R."/>
            <person name="Srikumar T."/>
            <person name="Shloush J."/>
            <person name="Avvakumov G.V."/>
            <person name="Walker J.R."/>
            <person name="Xue S."/>
            <person name="Neculai D."/>
            <person name="Wan J.W."/>
            <person name="Kim S.K."/>
            <person name="Arrowsmith C.H."/>
            <person name="Raught B."/>
            <person name="Dhe-Paganon S."/>
        </authorList>
    </citation>
    <scope>X-RAY CRYSTALLOGRAPHY (1.69 ANGSTROMS) OF 7-147</scope>
</reference>
<organism>
    <name type="scientific">Homo sapiens</name>
    <name type="common">Human</name>
    <dbReference type="NCBI Taxonomy" id="9606"/>
    <lineage>
        <taxon>Eukaryota</taxon>
        <taxon>Metazoa</taxon>
        <taxon>Chordata</taxon>
        <taxon>Craniata</taxon>
        <taxon>Vertebrata</taxon>
        <taxon>Euteleostomi</taxon>
        <taxon>Mammalia</taxon>
        <taxon>Eutheria</taxon>
        <taxon>Euarchontoglires</taxon>
        <taxon>Primates</taxon>
        <taxon>Haplorrhini</taxon>
        <taxon>Catarrhini</taxon>
        <taxon>Hominidae</taxon>
        <taxon>Homo</taxon>
    </lineage>
</organism>
<protein>
    <recommendedName>
        <fullName>Ubiquitin-conjugating enzyme E2 variant 1</fullName>
        <shortName>UEV-1</shortName>
    </recommendedName>
    <alternativeName>
        <fullName>CROC-1</fullName>
    </alternativeName>
    <alternativeName>
        <fullName>TRAF6-regulated IKK activator 1 beta Uev1A</fullName>
    </alternativeName>
</protein>
<sequence length="147" mass="16495">MAATTGSGVKVPRNFRLLEELEEGQKGVGDGTVSWGLEDDEDMTLTRWTGMIIGPPRTIYENRIYSLKIECGPKYPEAPPFVRFVTKINMNGVNSSNGVVDPRAISVLAKWQNSYSIKVVLQELRRLMMSKENMKLPQPPEGQCYSN</sequence>
<name>UB2V1_HUMAN</name>
<feature type="initiator methionine" description="Removed" evidence="14 23 24">
    <location>
        <position position="1"/>
    </location>
</feature>
<feature type="chain" id="PRO_0000082600" description="Ubiquitin-conjugating enzyme E2 variant 1">
    <location>
        <begin position="2"/>
        <end position="147"/>
    </location>
</feature>
<feature type="domain" description="UBC core" evidence="1">
    <location>
        <begin position="12"/>
        <end position="147"/>
    </location>
</feature>
<feature type="modified residue" description="N-acetylalanine" evidence="14 23 24">
    <location>
        <position position="2"/>
    </location>
</feature>
<feature type="splice variant" id="VSP_038032" description="In isoform 4." evidence="19">
    <location>
        <begin position="1"/>
        <end position="44"/>
    </location>
</feature>
<feature type="splice variant" id="VSP_038033" description="In isoform 2." evidence="18 19">
    <original>MAATTGSGVKVPRN</original>
    <variation>MPGEVQASYLKSQSKLSDEGRLEPRKFHCKGSKSPSQ</variation>
    <location>
        <begin position="1"/>
        <end position="14"/>
    </location>
</feature>
<feature type="splice variant" id="VSP_038034" description="In isoform 1." evidence="17 18 19">
    <original>MAATTGS</original>
    <variation>MAYKFRTHSPEALEQLYPWECFVFCLIIFGTFTNQIHKWSHTYFGLPRWVTLLQDWHVILPRKHHRIHHVSPHETYFCITT</variation>
    <location>
        <begin position="1"/>
        <end position="7"/>
    </location>
</feature>
<feature type="splice variant" id="VSP_038035" description="In isoform 5." evidence="15">
    <original>MAATTGS</original>
    <variation>MPGEVQASYLKSQSKLSDEGRLEPRKFHCK</variation>
    <location>
        <begin position="1"/>
        <end position="7"/>
    </location>
</feature>
<feature type="splice variant" id="VSP_038036" description="In isoform 4." evidence="19">
    <original>LTRWTGMIIGPPR</original>
    <variation>MKEDLNLENFTAK</variation>
    <location>
        <begin position="45"/>
        <end position="57"/>
    </location>
</feature>
<feature type="splice variant" id="VSP_044818" description="In isoform 6." evidence="16">
    <location>
        <begin position="58"/>
        <end position="99"/>
    </location>
</feature>
<feature type="helix" evidence="25">
    <location>
        <begin position="11"/>
        <end position="25"/>
    </location>
</feature>
<feature type="strand" evidence="25">
    <location>
        <begin position="31"/>
        <end position="39"/>
    </location>
</feature>
<feature type="strand" evidence="25">
    <location>
        <begin position="47"/>
        <end position="53"/>
    </location>
</feature>
<feature type="strand" evidence="26">
    <location>
        <begin position="56"/>
        <end position="58"/>
    </location>
</feature>
<feature type="turn" evidence="25">
    <location>
        <begin position="59"/>
        <end position="62"/>
    </location>
</feature>
<feature type="strand" evidence="25">
    <location>
        <begin position="64"/>
        <end position="70"/>
    </location>
</feature>
<feature type="turn" evidence="25">
    <location>
        <begin position="73"/>
        <end position="77"/>
    </location>
</feature>
<feature type="strand" evidence="25">
    <location>
        <begin position="81"/>
        <end position="86"/>
    </location>
</feature>
<feature type="strand" evidence="26">
    <location>
        <begin position="91"/>
        <end position="93"/>
    </location>
</feature>
<feature type="turn" evidence="25">
    <location>
        <begin position="95"/>
        <end position="97"/>
    </location>
</feature>
<feature type="helix" evidence="25">
    <location>
        <begin position="102"/>
        <end position="104"/>
    </location>
</feature>
<feature type="helix" evidence="25">
    <location>
        <begin position="106"/>
        <end position="109"/>
    </location>
</feature>
<feature type="helix" evidence="25">
    <location>
        <begin position="117"/>
        <end position="128"/>
    </location>
</feature>
<feature type="turn" evidence="25">
    <location>
        <begin position="131"/>
        <end position="135"/>
    </location>
</feature>
<feature type="sequence conflict" description="In Ref. 2; AAC02755." evidence="20" ref="2">
    <original>SPHETYFCITT</original>
    <variation>WPTSSAQCYSP</variation>
    <location sequence="Q13404-1">
        <begin position="71"/>
        <end position="81"/>
    </location>
</feature>
<dbReference type="EMBL" id="U39360">
    <property type="protein sequence ID" value="AAB72015.1"/>
    <property type="molecule type" value="mRNA"/>
</dbReference>
<dbReference type="EMBL" id="U39361">
    <property type="protein sequence ID" value="AAB72016.1"/>
    <property type="molecule type" value="mRNA"/>
</dbReference>
<dbReference type="EMBL" id="U49278">
    <property type="protein sequence ID" value="AAC02757.1"/>
    <property type="molecule type" value="mRNA"/>
</dbReference>
<dbReference type="EMBL" id="U97279">
    <property type="protein sequence ID" value="AAC02780.1"/>
    <property type="molecule type" value="mRNA"/>
</dbReference>
<dbReference type="EMBL" id="U97280">
    <property type="protein sequence ID" value="AAC02755.1"/>
    <property type="molecule type" value="mRNA"/>
</dbReference>
<dbReference type="EMBL" id="U97281">
    <property type="protein sequence ID" value="AAC02756.1"/>
    <property type="molecule type" value="mRNA"/>
</dbReference>
<dbReference type="EMBL" id="AY008273">
    <property type="protein sequence ID" value="AAG24229.1"/>
    <property type="molecule type" value="mRNA"/>
</dbReference>
<dbReference type="EMBL" id="BT007382">
    <property type="protein sequence ID" value="AAP36046.1"/>
    <property type="molecule type" value="mRNA"/>
</dbReference>
<dbReference type="EMBL" id="DA580976">
    <property type="status" value="NOT_ANNOTATED_CDS"/>
    <property type="molecule type" value="mRNA"/>
</dbReference>
<dbReference type="EMBL" id="AL034423">
    <property type="status" value="NOT_ANNOTATED_CDS"/>
    <property type="molecule type" value="Genomic_DNA"/>
</dbReference>
<dbReference type="EMBL" id="CH471077">
    <property type="protein sequence ID" value="EAW75635.1"/>
    <property type="molecule type" value="Genomic_DNA"/>
</dbReference>
<dbReference type="EMBL" id="CH471077">
    <property type="protein sequence ID" value="EAW75634.1"/>
    <property type="molecule type" value="Genomic_DNA"/>
</dbReference>
<dbReference type="EMBL" id="CH471077">
    <property type="protein sequence ID" value="EAW75636.1"/>
    <property type="molecule type" value="Genomic_DNA"/>
</dbReference>
<dbReference type="EMBL" id="BC000468">
    <property type="protein sequence ID" value="AAH00468.1"/>
    <property type="molecule type" value="mRNA"/>
</dbReference>
<dbReference type="EMBL" id="BC008944">
    <property type="protein sequence ID" value="AAH08944.2"/>
    <property type="status" value="ALT_INIT"/>
    <property type="molecule type" value="mRNA"/>
</dbReference>
<dbReference type="CCDS" id="CCDS13426.1">
    <molecule id="Q13404-7"/>
</dbReference>
<dbReference type="CCDS" id="CCDS13427.1">
    <molecule id="Q13404-6"/>
</dbReference>
<dbReference type="CCDS" id="CCDS33483.1">
    <molecule id="Q13404-4"/>
</dbReference>
<dbReference type="CCDS" id="CCDS58775.1">
    <molecule id="Q13404-8"/>
</dbReference>
<dbReference type="RefSeq" id="NP_001027459.1">
    <molecule id="Q13404-4"/>
    <property type="nucleotide sequence ID" value="NM_001032288.3"/>
</dbReference>
<dbReference type="RefSeq" id="NP_001244322.1">
    <molecule id="Q13404-7"/>
    <property type="nucleotide sequence ID" value="NM_001257393.2"/>
</dbReference>
<dbReference type="RefSeq" id="NP_001244323.1">
    <molecule id="Q13404-6"/>
    <property type="nucleotide sequence ID" value="NM_001257394.2"/>
</dbReference>
<dbReference type="RefSeq" id="NP_001244325.1">
    <molecule id="Q13404-8"/>
    <property type="nucleotide sequence ID" value="NM_001257396.2"/>
</dbReference>
<dbReference type="RefSeq" id="NP_068823.2">
    <molecule id="Q13404-7"/>
    <property type="nucleotide sequence ID" value="NM_021988.5"/>
</dbReference>
<dbReference type="RefSeq" id="NP_071887.1">
    <molecule id="Q13404-6"/>
    <property type="nucleotide sequence ID" value="NM_022442.6"/>
</dbReference>
<dbReference type="RefSeq" id="NP_954595.1">
    <molecule id="Q13404-7"/>
    <property type="nucleotide sequence ID" value="NM_199144.3"/>
</dbReference>
<dbReference type="RefSeq" id="NP_954673.1">
    <property type="nucleotide sequence ID" value="NM_199203.2"/>
</dbReference>
<dbReference type="PDB" id="2A4D">
    <property type="method" value="X-ray"/>
    <property type="resolution" value="1.69 A"/>
    <property type="chains" value="A=8-147"/>
</dbReference>
<dbReference type="PDB" id="2C2V">
    <property type="method" value="X-ray"/>
    <property type="resolution" value="2.90 A"/>
    <property type="chains" value="C/F/I/L=8-147"/>
</dbReference>
<dbReference type="PDB" id="2HLW">
    <property type="method" value="NMR"/>
    <property type="chains" value="A=8-147"/>
</dbReference>
<dbReference type="PDB" id="6D6I">
    <property type="method" value="X-ray"/>
    <property type="resolution" value="2.55 A"/>
    <property type="chains" value="A/D=8-147"/>
</dbReference>
<dbReference type="PDBsum" id="2A4D"/>
<dbReference type="PDBsum" id="2C2V"/>
<dbReference type="PDBsum" id="2HLW"/>
<dbReference type="PDBsum" id="6D6I"/>
<dbReference type="BMRB" id="Q13404"/>
<dbReference type="SMR" id="Q13404"/>
<dbReference type="BioGRID" id="113183">
    <property type="interactions" value="120"/>
</dbReference>
<dbReference type="BioGRID" id="132321">
    <property type="interactions" value="42"/>
</dbReference>
<dbReference type="ComplexPortal" id="CPX-485">
    <property type="entry name" value="UBC13-UEV1A ubiquitin-conjugating enzyme E2 complex"/>
</dbReference>
<dbReference type="CORUM" id="Q13404"/>
<dbReference type="DIP" id="DIP-41911N"/>
<dbReference type="FunCoup" id="Q13404">
    <property type="interactions" value="3253"/>
</dbReference>
<dbReference type="IntAct" id="Q13404">
    <property type="interactions" value="140"/>
</dbReference>
<dbReference type="MINT" id="Q13404"/>
<dbReference type="MoonDB" id="Q13404">
    <property type="type" value="Predicted"/>
</dbReference>
<dbReference type="GlyGen" id="Q13404">
    <property type="glycosylation" value="1 site, 1 O-linked glycan (1 site)"/>
</dbReference>
<dbReference type="iPTMnet" id="Q13404"/>
<dbReference type="PhosphoSitePlus" id="Q13404"/>
<dbReference type="SwissPalm" id="Q13404"/>
<dbReference type="BioMuta" id="UBE2V1"/>
<dbReference type="DMDM" id="259016163"/>
<dbReference type="jPOST" id="Q13404"/>
<dbReference type="MassIVE" id="Q13404"/>
<dbReference type="PeptideAtlas" id="Q13404"/>
<dbReference type="ProteomicsDB" id="59382">
    <molecule id="Q13404-4"/>
</dbReference>
<dbReference type="ProteomicsDB" id="59383">
    <molecule id="Q13404-1"/>
</dbReference>
<dbReference type="ProteomicsDB" id="59384">
    <molecule id="Q13404-2"/>
</dbReference>
<dbReference type="ProteomicsDB" id="59385">
    <molecule id="Q13404-6"/>
</dbReference>
<dbReference type="ProteomicsDB" id="59386">
    <molecule id="Q13404-7"/>
</dbReference>
<dbReference type="ProteomicsDB" id="65114"/>
<dbReference type="Pumba" id="Q13404"/>
<dbReference type="TopDownProteomics" id="Q13404-4">
    <molecule id="Q13404-4"/>
</dbReference>
<dbReference type="Antibodypedia" id="35021">
    <property type="antibodies" value="274 antibodies from 33 providers"/>
</dbReference>
<dbReference type="DNASU" id="7335"/>
<dbReference type="Ensembl" id="ENST00000340309.7">
    <molecule id="Q13404-7"/>
    <property type="protein sequence ID" value="ENSP00000340305.3"/>
    <property type="gene ID" value="ENSG00000244687.13"/>
</dbReference>
<dbReference type="Ensembl" id="ENST00000371657.9">
    <molecule id="Q13404-8"/>
    <property type="protein sequence ID" value="ENSP00000360720.5"/>
    <property type="gene ID" value="ENSG00000244687.13"/>
</dbReference>
<dbReference type="Ensembl" id="ENST00000371674.8">
    <molecule id="Q13404-4"/>
    <property type="protein sequence ID" value="ENSP00000360739.4"/>
    <property type="gene ID" value="ENSG00000244687.13"/>
</dbReference>
<dbReference type="Ensembl" id="ENST00000371677.7">
    <molecule id="Q13404-7"/>
    <property type="protein sequence ID" value="ENSP00000360742.3"/>
    <property type="gene ID" value="ENSG00000244687.13"/>
</dbReference>
<dbReference type="Ensembl" id="ENST00000415862.6">
    <molecule id="Q13404-6"/>
    <property type="protein sequence ID" value="ENSP00000407770.2"/>
    <property type="gene ID" value="ENSG00000244687.13"/>
</dbReference>
<dbReference type="GeneID" id="7335"/>
<dbReference type="KEGG" id="hsa:387522"/>
<dbReference type="KEGG" id="hsa:7335"/>
<dbReference type="MANE-Select" id="ENST00000371674.8">
    <property type="protein sequence ID" value="ENSP00000360739.4"/>
    <property type="RefSeq nucleotide sequence ID" value="NM_001032288.3"/>
    <property type="RefSeq protein sequence ID" value="NP_001027459.1"/>
</dbReference>
<dbReference type="UCSC" id="uc002xva.5">
    <molecule id="Q13404-4"/>
    <property type="organism name" value="human"/>
</dbReference>
<dbReference type="AGR" id="HGNC:12494"/>
<dbReference type="AGR" id="HGNC:33521"/>
<dbReference type="CTD" id="387522"/>
<dbReference type="CTD" id="7335"/>
<dbReference type="DisGeNET" id="387522"/>
<dbReference type="DisGeNET" id="7335"/>
<dbReference type="GeneCards" id="UBE2V1"/>
<dbReference type="HGNC" id="HGNC:12494">
    <property type="gene designation" value="UBE2V1"/>
</dbReference>
<dbReference type="HPA" id="ENSG00000244687">
    <property type="expression patterns" value="Low tissue specificity"/>
</dbReference>
<dbReference type="MIM" id="602995">
    <property type="type" value="gene"/>
</dbReference>
<dbReference type="neXtProt" id="NX_Q13404"/>
<dbReference type="OpenTargets" id="ENSG00000244687"/>
<dbReference type="PharmGKB" id="PA37142"/>
<dbReference type="VEuPathDB" id="HostDB:ENSG00000244687"/>
<dbReference type="eggNOG" id="KOG0896">
    <property type="taxonomic scope" value="Eukaryota"/>
</dbReference>
<dbReference type="GeneTree" id="ENSGT00940000158854"/>
<dbReference type="HOGENOM" id="CLU_063065_1_2_1"/>
<dbReference type="InParanoid" id="Q13404"/>
<dbReference type="OMA" id="GPESCSY"/>
<dbReference type="OrthoDB" id="6508832at2759"/>
<dbReference type="PAN-GO" id="Q13404">
    <property type="GO annotations" value="3 GO annotations based on evolutionary models"/>
</dbReference>
<dbReference type="TreeFam" id="TF316971"/>
<dbReference type="BRENDA" id="2.3.2.23">
    <property type="organism ID" value="2681"/>
</dbReference>
<dbReference type="BRENDA" id="2.3.2.24">
    <property type="organism ID" value="2681"/>
</dbReference>
<dbReference type="PathwayCommons" id="Q13404"/>
<dbReference type="Reactome" id="R-HSA-168638">
    <property type="pathway name" value="NOD1/2 Signaling Pathway"/>
</dbReference>
<dbReference type="Reactome" id="R-HSA-168927">
    <property type="pathway name" value="TICAM1, RIP1-mediated IKK complex recruitment"/>
</dbReference>
<dbReference type="Reactome" id="R-HSA-202424">
    <property type="pathway name" value="Downstream TCR signaling"/>
</dbReference>
<dbReference type="Reactome" id="R-HSA-2871837">
    <property type="pathway name" value="FCERI mediated NF-kB activation"/>
</dbReference>
<dbReference type="Reactome" id="R-HSA-445989">
    <property type="pathway name" value="TAK1-dependent IKK and NF-kappa-B activation"/>
</dbReference>
<dbReference type="Reactome" id="R-HSA-450302">
    <property type="pathway name" value="activated TAK1 mediates p38 MAPK activation"/>
</dbReference>
<dbReference type="Reactome" id="R-HSA-450321">
    <property type="pathway name" value="JNK (c-Jun kinases) phosphorylation and activation mediated by activated human TAK1"/>
</dbReference>
<dbReference type="Reactome" id="R-HSA-5205685">
    <property type="pathway name" value="PINK1-PRKN Mediated Mitophagy"/>
</dbReference>
<dbReference type="Reactome" id="R-HSA-5607764">
    <property type="pathway name" value="CLEC7A (Dectin-1) signaling"/>
</dbReference>
<dbReference type="Reactome" id="R-HSA-9020702">
    <property type="pathway name" value="Interleukin-1 signaling"/>
</dbReference>
<dbReference type="Reactome" id="R-HSA-937039">
    <property type="pathway name" value="IRAK1 recruits IKK complex"/>
</dbReference>
<dbReference type="Reactome" id="R-HSA-937041">
    <property type="pathway name" value="IKK complex recruitment mediated by RIP1"/>
</dbReference>
<dbReference type="Reactome" id="R-HSA-9646399">
    <property type="pathway name" value="Aggrephagy"/>
</dbReference>
<dbReference type="Reactome" id="R-HSA-9705671">
    <property type="pathway name" value="SARS-CoV-2 activates/modulates innate and adaptive immune responses"/>
</dbReference>
<dbReference type="Reactome" id="R-HSA-975110">
    <property type="pathway name" value="TRAF6 mediated IRF7 activation in TLR7/8 or 9 signaling"/>
</dbReference>
<dbReference type="Reactome" id="R-HSA-975144">
    <property type="pathway name" value="IRAK1 recruits IKK complex upon TLR7/8 or 9 stimulation"/>
</dbReference>
<dbReference type="Reactome" id="R-HSA-983168">
    <property type="pathway name" value="Antigen processing: Ubiquitination &amp; Proteasome degradation"/>
</dbReference>
<dbReference type="SignaLink" id="Q13404"/>
<dbReference type="SIGNOR" id="Q13404"/>
<dbReference type="BioGRID-ORCS" id="387522">
    <property type="hits" value="76 hits in 964 CRISPR screens"/>
</dbReference>
<dbReference type="BioGRID-ORCS" id="7335">
    <property type="hits" value="228 hits in 1089 CRISPR screens"/>
</dbReference>
<dbReference type="ChiTaRS" id="UBE2V1">
    <property type="organism name" value="human"/>
</dbReference>
<dbReference type="EvolutionaryTrace" id="Q13404"/>
<dbReference type="GeneWiki" id="UBE2V1"/>
<dbReference type="Pharos" id="Q13404">
    <property type="development level" value="Tbio"/>
</dbReference>
<dbReference type="PRO" id="PR:Q13404"/>
<dbReference type="Proteomes" id="UP000005640">
    <property type="component" value="Chromosome 20"/>
</dbReference>
<dbReference type="RNAct" id="Q13404">
    <property type="molecule type" value="protein"/>
</dbReference>
<dbReference type="Bgee" id="ENSG00000244687">
    <property type="expression patterns" value="Expressed in colonic epithelium and 104 other cell types or tissues"/>
</dbReference>
<dbReference type="ExpressionAtlas" id="Q13404">
    <property type="expression patterns" value="baseline and differential"/>
</dbReference>
<dbReference type="GO" id="GO:0005737">
    <property type="term" value="C:cytoplasm"/>
    <property type="evidence" value="ECO:0000314"/>
    <property type="project" value="HGNC-UCL"/>
</dbReference>
<dbReference type="GO" id="GO:0005829">
    <property type="term" value="C:cytosol"/>
    <property type="evidence" value="ECO:0000314"/>
    <property type="project" value="ComplexPortal"/>
</dbReference>
<dbReference type="GO" id="GO:0070062">
    <property type="term" value="C:extracellular exosome"/>
    <property type="evidence" value="ECO:0007005"/>
    <property type="project" value="UniProtKB"/>
</dbReference>
<dbReference type="GO" id="GO:0005654">
    <property type="term" value="C:nucleoplasm"/>
    <property type="evidence" value="ECO:0000314"/>
    <property type="project" value="HPA"/>
</dbReference>
<dbReference type="GO" id="GO:0005634">
    <property type="term" value="C:nucleus"/>
    <property type="evidence" value="ECO:0000318"/>
    <property type="project" value="GO_Central"/>
</dbReference>
<dbReference type="GO" id="GO:0032991">
    <property type="term" value="C:protein-containing complex"/>
    <property type="evidence" value="ECO:0000314"/>
    <property type="project" value="MGI"/>
</dbReference>
<dbReference type="GO" id="GO:0031372">
    <property type="term" value="C:UBC13-MMS2 complex"/>
    <property type="evidence" value="ECO:0000314"/>
    <property type="project" value="UniProtKB"/>
</dbReference>
<dbReference type="GO" id="GO:0031371">
    <property type="term" value="C:ubiquitin conjugating enzyme complex"/>
    <property type="evidence" value="ECO:0000314"/>
    <property type="project" value="HGNC-UCL"/>
</dbReference>
<dbReference type="GO" id="GO:0000151">
    <property type="term" value="C:ubiquitin ligase complex"/>
    <property type="evidence" value="ECO:0000314"/>
    <property type="project" value="UniProtKB"/>
</dbReference>
<dbReference type="GO" id="GO:0061631">
    <property type="term" value="F:ubiquitin conjugating enzyme activity"/>
    <property type="evidence" value="ECO:0007669"/>
    <property type="project" value="Ensembl"/>
</dbReference>
<dbReference type="GO" id="GO:0031624">
    <property type="term" value="F:ubiquitin conjugating enzyme binding"/>
    <property type="evidence" value="ECO:0007669"/>
    <property type="project" value="Ensembl"/>
</dbReference>
<dbReference type="GO" id="GO:0030154">
    <property type="term" value="P:cell differentiation"/>
    <property type="evidence" value="ECO:0000303"/>
    <property type="project" value="UniProtKB"/>
</dbReference>
<dbReference type="GO" id="GO:0042275">
    <property type="term" value="P:error-free postreplication DNA repair"/>
    <property type="evidence" value="ECO:0007669"/>
    <property type="project" value="Ensembl"/>
</dbReference>
<dbReference type="GO" id="GO:0043123">
    <property type="term" value="P:positive regulation of canonical NF-kappaB signal transduction"/>
    <property type="evidence" value="ECO:0000315"/>
    <property type="project" value="HGNC-UCL"/>
</dbReference>
<dbReference type="GO" id="GO:0045893">
    <property type="term" value="P:positive regulation of DNA-templated transcription"/>
    <property type="evidence" value="ECO:0000304"/>
    <property type="project" value="UniProtKB"/>
</dbReference>
<dbReference type="GO" id="GO:1902533">
    <property type="term" value="P:positive regulation of intracellular signal transduction"/>
    <property type="evidence" value="ECO:0000314"/>
    <property type="project" value="ComplexPortal"/>
</dbReference>
<dbReference type="GO" id="GO:1902523">
    <property type="term" value="P:positive regulation of protein K63-linked ubiquitination"/>
    <property type="evidence" value="ECO:0000314"/>
    <property type="project" value="ComplexPortal"/>
</dbReference>
<dbReference type="GO" id="GO:0006301">
    <property type="term" value="P:postreplication repair"/>
    <property type="evidence" value="ECO:0000318"/>
    <property type="project" value="GO_Central"/>
</dbReference>
<dbReference type="GO" id="GO:0070534">
    <property type="term" value="P:protein K63-linked ubiquitination"/>
    <property type="evidence" value="ECO:0000314"/>
    <property type="project" value="UniProtKB"/>
</dbReference>
<dbReference type="GO" id="GO:0000209">
    <property type="term" value="P:protein polyubiquitination"/>
    <property type="evidence" value="ECO:0000304"/>
    <property type="project" value="ProtInc"/>
</dbReference>
<dbReference type="GO" id="GO:0006282">
    <property type="term" value="P:regulation of DNA repair"/>
    <property type="evidence" value="ECO:0000304"/>
    <property type="project" value="ProtInc"/>
</dbReference>
<dbReference type="GO" id="GO:0006355">
    <property type="term" value="P:regulation of DNA-templated transcription"/>
    <property type="evidence" value="ECO:0000304"/>
    <property type="project" value="UniProtKB"/>
</dbReference>
<dbReference type="CDD" id="cd23807">
    <property type="entry name" value="UEV_UBE2V"/>
    <property type="match status" value="1"/>
</dbReference>
<dbReference type="FunFam" id="3.10.110.10:FF:000012">
    <property type="entry name" value="Ubiquitin-conjugating enzyme E2 variant 2"/>
    <property type="match status" value="1"/>
</dbReference>
<dbReference type="Gene3D" id="3.10.110.10">
    <property type="entry name" value="Ubiquitin Conjugating Enzyme"/>
    <property type="match status" value="1"/>
</dbReference>
<dbReference type="InterPro" id="IPR000608">
    <property type="entry name" value="UBQ-conjugat_E2_core"/>
</dbReference>
<dbReference type="InterPro" id="IPR016135">
    <property type="entry name" value="UBQ-conjugating_enzyme/RWD"/>
</dbReference>
<dbReference type="PANTHER" id="PTHR24068">
    <property type="entry name" value="UBIQUITIN-CONJUGATING ENZYME E2"/>
    <property type="match status" value="1"/>
</dbReference>
<dbReference type="Pfam" id="PF00179">
    <property type="entry name" value="UQ_con"/>
    <property type="match status" value="1"/>
</dbReference>
<dbReference type="SMART" id="SM00212">
    <property type="entry name" value="UBCc"/>
    <property type="match status" value="1"/>
</dbReference>
<dbReference type="SUPFAM" id="SSF54495">
    <property type="entry name" value="UBC-like"/>
    <property type="match status" value="1"/>
</dbReference>
<dbReference type="PROSITE" id="PS50127">
    <property type="entry name" value="UBC_2"/>
    <property type="match status" value="1"/>
</dbReference>
<evidence type="ECO:0000255" key="1">
    <source>
        <dbReference type="PROSITE-ProRule" id="PRU00388"/>
    </source>
</evidence>
<evidence type="ECO:0000269" key="2">
    <source>
    </source>
</evidence>
<evidence type="ECO:0000269" key="3">
    <source>
    </source>
</evidence>
<evidence type="ECO:0000269" key="4">
    <source>
    </source>
</evidence>
<evidence type="ECO:0000269" key="5">
    <source>
    </source>
</evidence>
<evidence type="ECO:0000269" key="6">
    <source>
    </source>
</evidence>
<evidence type="ECO:0000269" key="7">
    <source>
    </source>
</evidence>
<evidence type="ECO:0000269" key="8">
    <source>
    </source>
</evidence>
<evidence type="ECO:0000269" key="9">
    <source>
    </source>
</evidence>
<evidence type="ECO:0000269" key="10">
    <source>
    </source>
</evidence>
<evidence type="ECO:0000269" key="11">
    <source>
    </source>
</evidence>
<evidence type="ECO:0000269" key="12">
    <source>
    </source>
</evidence>
<evidence type="ECO:0000269" key="13">
    <source>
    </source>
</evidence>
<evidence type="ECO:0000269" key="14">
    <source ref="8"/>
</evidence>
<evidence type="ECO:0000303" key="15">
    <source>
    </source>
</evidence>
<evidence type="ECO:0000303" key="16">
    <source>
    </source>
</evidence>
<evidence type="ECO:0000303" key="17">
    <source>
    </source>
</evidence>
<evidence type="ECO:0000303" key="18">
    <source>
    </source>
</evidence>
<evidence type="ECO:0000303" key="19">
    <source>
    </source>
</evidence>
<evidence type="ECO:0000305" key="20"/>
<evidence type="ECO:0007744" key="21">
    <source>
        <dbReference type="PDB" id="2A4D"/>
    </source>
</evidence>
<evidence type="ECO:0007744" key="22">
    <source>
        <dbReference type="PDB" id="2HLW"/>
    </source>
</evidence>
<evidence type="ECO:0007744" key="23">
    <source>
    </source>
</evidence>
<evidence type="ECO:0007744" key="24">
    <source>
    </source>
</evidence>
<evidence type="ECO:0007829" key="25">
    <source>
        <dbReference type="PDB" id="2A4D"/>
    </source>
</evidence>
<evidence type="ECO:0007829" key="26">
    <source>
        <dbReference type="PDB" id="2HLW"/>
    </source>
</evidence>
<comment type="function">
    <text evidence="2 6 7 8 9 10 11 12 13">Has no ubiquitin ligase activity on its own. The UBE2V1-UBE2N heterodimer catalyzes the synthesis of non-canonical poly-ubiquitin chains that are linked through Lys-63. This type of poly-ubiquitination activates IKK and does not seem to involve protein degradation by the proteasome. Plays a role in the activation of NF-kappa-B mediated by IL1B, TNF, TRAF6 and TRAF2. Mediates transcriptional activation of target genes. Plays a role in the control of progress through the cell cycle and differentiation. Plays a role in the error-free DNA repair pathway and contributes to the survival of cells after DNA damage. Promotes TRIM5 capsid-specific restriction activity and the UBE2V1-UBE2N heterodimer acts in concert with TRIM5 to generate 'Lys-63'-linked polyubiquitin chains which activate the MAP3K7/TAK1 complex which in turn results in the induction and expression of NF-kappa-B and MAPK-responsive inflammatory genes. Together with RNF135 and UBE2N, catalyzes the viral RNA-dependent 'Lys-63'-linked polyubiquitination of RIGI to activate the downstream signaling pathway that leads to interferon beta production (PubMed:31006531). UBE2V1-UBE2N together with TRAF3IP2 E3 ubiquitin ligase mediate 'Lys-63'-linked polyubiquitination of TRAF6, a component of IL17A-mediated signaling pathway.</text>
</comment>
<comment type="subunit">
    <text evidence="2 4 5">Heterodimer with UBE2N (PubMed:11057907, PubMed:16307917, PubMed:16893187). Interacts (UBE2V2-UBE2N heterodimer) with the E3 ligase STUB1 (via the U-box domain); the complex has a specific 'Lys-63'-linked polyubiquitination activity (PubMed:16307917). Interacts with TRAF6 (PubMed:11057907, PubMed:16307917).</text>
</comment>
<comment type="interaction">
    <interactant intactId="EBI-1050671">
        <id>Q13404</id>
    </interactant>
    <interactant intactId="EBI-21535880">
        <id>Q92870-2</id>
        <label>APBB2</label>
    </interactant>
    <organismsDiffer>false</organismsDiffer>
    <experiments>3</experiments>
</comment>
<comment type="interaction">
    <interactant intactId="EBI-1050671">
        <id>Q13404</id>
    </interactant>
    <interactant intactId="EBI-930964">
        <id>P54253</id>
        <label>ATXN1</label>
    </interactant>
    <organismsDiffer>false</organismsDiffer>
    <experiments>6</experiments>
</comment>
<comment type="interaction">
    <interactant intactId="EBI-1050671">
        <id>Q13404</id>
    </interactant>
    <interactant intactId="EBI-6875961">
        <id>P02489</id>
        <label>CRYAA</label>
    </interactant>
    <organismsDiffer>false</organismsDiffer>
    <experiments>3</experiments>
</comment>
<comment type="interaction">
    <interactant intactId="EBI-1050671">
        <id>Q13404</id>
    </interactant>
    <interactant intactId="EBI-1188472">
        <id>P78358</id>
        <label>CTAG1B</label>
    </interactant>
    <organismsDiffer>false</organismsDiffer>
    <experiments>3</experiments>
</comment>
<comment type="interaction">
    <interactant intactId="EBI-1050671">
        <id>Q13404</id>
    </interactant>
    <interactant intactId="EBI-724310">
        <id>Q15038</id>
        <label>DAZAP2</label>
    </interactant>
    <organismsDiffer>false</organismsDiffer>
    <experiments>3</experiments>
</comment>
<comment type="interaction">
    <interactant intactId="EBI-1050671">
        <id>Q13404</id>
    </interactant>
    <interactant intactId="EBI-10976677">
        <id>G5E9A7</id>
        <label>DMWD</label>
    </interactant>
    <organismsDiffer>false</organismsDiffer>
    <experiments>3</experiments>
</comment>
<comment type="interaction">
    <interactant intactId="EBI-1050671">
        <id>Q13404</id>
    </interactant>
    <interactant intactId="EBI-7957930">
        <id>Q92567</id>
        <label>FAM168A</label>
    </interactant>
    <organismsDiffer>false</organismsDiffer>
    <experiments>4</experiments>
</comment>
<comment type="interaction">
    <interactant intactId="EBI-1050671">
        <id>Q13404</id>
    </interactant>
    <interactant intactId="EBI-348399">
        <id>P22607</id>
        <label>FGFR3</label>
    </interactant>
    <organismsDiffer>false</organismsDiffer>
    <experiments>3</experiments>
</comment>
<comment type="interaction">
    <interactant intactId="EBI-1050671">
        <id>Q13404</id>
    </interactant>
    <interactant intactId="EBI-8285963">
        <id>Q14957</id>
        <label>GRIN2C</label>
    </interactant>
    <organismsDiffer>false</organismsDiffer>
    <experiments>3</experiments>
</comment>
<comment type="interaction">
    <interactant intactId="EBI-1050671">
        <id>Q13404</id>
    </interactant>
    <interactant intactId="EBI-351506">
        <id>P06396</id>
        <label>GSN</label>
    </interactant>
    <organismsDiffer>false</organismsDiffer>
    <experiments>3</experiments>
</comment>
<comment type="interaction">
    <interactant intactId="EBI-1050671">
        <id>Q13404</id>
    </interactant>
    <interactant intactId="EBI-354921">
        <id>P11021</id>
        <label>HSPA5</label>
    </interactant>
    <organismsDiffer>false</organismsDiffer>
    <experiments>3</experiments>
</comment>
<comment type="interaction">
    <interactant intactId="EBI-1050671">
        <id>Q13404</id>
    </interactant>
    <interactant intactId="EBI-10975473">
        <id>O60333-2</id>
        <label>KIF1B</label>
    </interactant>
    <organismsDiffer>false</organismsDiffer>
    <experiments>3</experiments>
</comment>
<comment type="interaction">
    <interactant intactId="EBI-1050671">
        <id>Q13404</id>
    </interactant>
    <interactant intactId="EBI-2432309">
        <id>Q92876</id>
        <label>KLK6</label>
    </interactant>
    <organismsDiffer>false</organismsDiffer>
    <experiments>3</experiments>
</comment>
<comment type="interaction">
    <interactant intactId="EBI-1050671">
        <id>Q13404</id>
    </interactant>
    <interactant intactId="EBI-21251460">
        <id>O60260-5</id>
        <label>PRKN</label>
    </interactant>
    <organismsDiffer>false</organismsDiffer>
    <experiments>3</experiments>
</comment>
<comment type="interaction">
    <interactant intactId="EBI-1050671">
        <id>Q13404</id>
    </interactant>
    <interactant intactId="EBI-396669">
        <id>Q9Y3C5</id>
        <label>RNF11</label>
    </interactant>
    <organismsDiffer>false</organismsDiffer>
    <experiments>4</experiments>
</comment>
<comment type="interaction">
    <interactant intactId="EBI-1050671">
        <id>Q13404</id>
    </interactant>
    <interactant intactId="EBI-2129175">
        <id>Q6ZNA4</id>
        <label>RNF111</label>
    </interactant>
    <organismsDiffer>false</organismsDiffer>
    <experiments>2</experiments>
</comment>
<comment type="interaction">
    <interactant intactId="EBI-1050671">
        <id>Q13404</id>
    </interactant>
    <interactant intactId="EBI-18035902">
        <id>Q96DD7</id>
        <label>SHISA4</label>
    </interactant>
    <organismsDiffer>false</organismsDiffer>
    <experiments>3</experiments>
</comment>
<comment type="interaction">
    <interactant intactId="EBI-1050671">
        <id>Q13404</id>
    </interactant>
    <interactant intactId="EBI-372899">
        <id>Q13148</id>
        <label>TARDBP</label>
    </interactant>
    <organismsDiffer>false</organismsDiffer>
    <experiments>3</experiments>
</comment>
<comment type="interaction">
    <interactant intactId="EBI-1050671">
        <id>Q13404</id>
    </interactant>
    <interactant intactId="EBI-742790">
        <id>Q13049</id>
        <label>TRIM32</label>
    </interactant>
    <organismsDiffer>false</organismsDiffer>
    <experiments>4</experiments>
</comment>
<comment type="interaction">
    <interactant intactId="EBI-1050671">
        <id>Q13404</id>
    </interactant>
    <interactant intactId="EBI-1052908">
        <id>P61088</id>
        <label>UBE2N</label>
    </interactant>
    <organismsDiffer>false</organismsDiffer>
    <experiments>20</experiments>
</comment>
<comment type="interaction">
    <interactant intactId="EBI-1050671">
        <id>Q13404</id>
    </interactant>
    <interactant intactId="EBI-741480">
        <id>Q9UMX0</id>
        <label>UBQLN1</label>
    </interactant>
    <organismsDiffer>false</organismsDiffer>
    <experiments>9</experiments>
</comment>
<comment type="interaction">
    <interactant intactId="EBI-1050671">
        <id>Q13404</id>
    </interactant>
    <interactant intactId="EBI-10173939">
        <id>Q9UMX0-2</id>
        <label>UBQLN1</label>
    </interactant>
    <organismsDiffer>false</organismsDiffer>
    <experiments>3</experiments>
</comment>
<comment type="interaction">
    <interactant intactId="EBI-1050671">
        <id>Q13404</id>
    </interactant>
    <interactant intactId="EBI-947187">
        <id>Q9UHD9</id>
        <label>UBQLN2</label>
    </interactant>
    <organismsDiffer>false</organismsDiffer>
    <experiments>3</experiments>
</comment>
<comment type="interaction">
    <interactant intactId="EBI-1050671">
        <id>Q13404</id>
    </interactant>
    <interactant intactId="EBI-6942961">
        <id>P17861</id>
        <label>XBP1</label>
    </interactant>
    <organismsDiffer>false</organismsDiffer>
    <experiments>3</experiments>
</comment>
<comment type="interaction">
    <interactant intactId="EBI-1050671">
        <id>Q13404</id>
    </interactant>
    <interactant intactId="EBI-517127">
        <id>P98170</id>
        <label>XIAP</label>
    </interactant>
    <organismsDiffer>false</organismsDiffer>
    <experiments>3</experiments>
</comment>
<comment type="interaction">
    <interactant intactId="EBI-1050671">
        <id>Q13404</id>
    </interactant>
    <interactant intactId="EBI-2129250">
        <id>Q8ND25</id>
        <label>ZNRF1</label>
    </interactant>
    <organismsDiffer>false</organismsDiffer>
    <experiments>2</experiments>
</comment>
<comment type="interaction">
    <interactant intactId="EBI-15972179">
        <id>Q13404-2</id>
    </interactant>
    <interactant intactId="EBI-1052908">
        <id>P61088</id>
        <label>UBE2N</label>
    </interactant>
    <organismsDiffer>false</organismsDiffer>
    <experiments>2</experiments>
</comment>
<comment type="subcellular location">
    <subcellularLocation>
        <location evidence="3 10">Nucleus</location>
    </subcellularLocation>
    <text>Excluded from the nucleolus.</text>
</comment>
<comment type="alternative products">
    <event type="alternative splicing"/>
    <isoform>
        <id>Q13404-4</id>
        <name>3</name>
        <name>Isoform 2</name>
        <sequence type="displayed"/>
    </isoform>
    <isoform>
        <id>Q13404-1</id>
        <name>1</name>
        <name>CROC-1B</name>
        <name>UEV-1B</name>
        <name>Isoform 4</name>
        <sequence type="described" ref="VSP_038034"/>
    </isoform>
    <isoform>
        <id>Q13404-2</id>
        <name>2</name>
        <name>CROC-1A</name>
        <name>UEV-1A</name>
        <sequence type="described" ref="VSP_038033"/>
    </isoform>
    <isoform>
        <id>Q13404-6</id>
        <name>4</name>
        <name>UEV-1As</name>
        <sequence type="described" ref="VSP_038032 VSP_038036"/>
    </isoform>
    <isoform>
        <id>Q13404-7</id>
        <name>5</name>
        <name>Isoform 3</name>
        <sequence type="described" ref="VSP_038035"/>
    </isoform>
    <isoform>
        <id>Q13404-8</id>
        <name>6</name>
        <sequence type="described" ref="VSP_044818"/>
    </isoform>
    <text>Additional isoforms seem to exist.</text>
</comment>
<comment type="tissue specificity">
    <text evidence="11 13">Highly expressed in thyroid, pancreas, spinal cord, lymph node, trachea, adrenal gland, bone marrow and pancreas. Detected at low levels in heart, breast, placenta, brain, liver, kidney, stomach and lung.</text>
</comment>
<comment type="induction">
    <text evidence="11">Down-regulated during differentiation of cultured colon adenocarcinoma cells.</text>
</comment>
<comment type="miscellaneous">
    <text>In human, PESD1/KUA and UBE2V1/UEV1 are adjacent genes which can produce independent proteins and can also be fused to form a PESD1-UBE2V1 hybrid protein.</text>
</comment>
<comment type="similarity">
    <text evidence="1">Belongs to the ubiquitin-conjugating enzyme family.</text>
</comment>
<comment type="sequence caution" evidence="20">
    <conflict type="erroneous initiation">
        <sequence resource="EMBL-CDS" id="AAH08944"/>
    </conflict>
</comment>
<keyword id="KW-0002">3D-structure</keyword>
<keyword id="KW-0007">Acetylation</keyword>
<keyword id="KW-0025">Alternative splicing</keyword>
<keyword id="KW-0903">Direct protein sequencing</keyword>
<keyword id="KW-0539">Nucleus</keyword>
<keyword id="KW-1267">Proteomics identification</keyword>
<keyword id="KW-1185">Reference proteome</keyword>
<keyword id="KW-0833">Ubl conjugation pathway</keyword>
<gene>
    <name type="primary">UBE2V1</name>
    <name type="synonym">CROC1</name>
    <name type="synonym">UBE2V</name>
    <name type="synonym">UEV1</name>
    <name type="ORF">P/OKcl.19</name>
</gene>
<proteinExistence type="evidence at protein level"/>